<evidence type="ECO:0000255" key="1">
    <source>
        <dbReference type="HAMAP-Rule" id="MF_00268"/>
    </source>
</evidence>
<proteinExistence type="inferred from homology"/>
<keyword id="KW-0067">ATP-binding</keyword>
<keyword id="KW-0963">Cytoplasm</keyword>
<keyword id="KW-0227">DNA damage</keyword>
<keyword id="KW-0233">DNA recombination</keyword>
<keyword id="KW-0234">DNA repair</keyword>
<keyword id="KW-0238">DNA-binding</keyword>
<keyword id="KW-0547">Nucleotide-binding</keyword>
<keyword id="KW-1185">Reference proteome</keyword>
<keyword id="KW-0742">SOS response</keyword>
<name>RECA_XANCP</name>
<reference key="1">
    <citation type="journal article" date="1996" name="Biochem. Biophys. Res. Commun.">
        <title>Isolation and characterization of the recA gene of Xanthomonas campestris pv. campestris.</title>
        <authorList>
            <person name="Lee T.C."/>
            <person name="Lin N.T."/>
            <person name="Tseng Y.H."/>
        </authorList>
    </citation>
    <scope>NUCLEOTIDE SEQUENCE [GENOMIC DNA]</scope>
    <source>
        <strain>Xc17</strain>
    </source>
</reference>
<reference key="2">
    <citation type="journal article" date="2002" name="FEMS Microbiol. Lett.">
        <title>Genetic organization of the lexA, recA and recX genes in Xanthomonas campestris.</title>
        <authorList>
            <person name="Yang Y.-C."/>
            <person name="Hsu C.-H."/>
            <person name="Chou C.-P."/>
            <person name="Yang M.-K."/>
        </authorList>
    </citation>
    <scope>NUCLEOTIDE SEQUENCE [GENOMIC DNA]</scope>
    <source>
        <strain>Xc33-1</strain>
    </source>
</reference>
<reference key="3">
    <citation type="journal article" date="2002" name="Nature">
        <title>Comparison of the genomes of two Xanthomonas pathogens with differing host specificities.</title>
        <authorList>
            <person name="da Silva A.C.R."/>
            <person name="Ferro J.A."/>
            <person name="Reinach F.C."/>
            <person name="Farah C.S."/>
            <person name="Furlan L.R."/>
            <person name="Quaggio R.B."/>
            <person name="Monteiro-Vitorello C.B."/>
            <person name="Van Sluys M.A."/>
            <person name="Almeida N.F. Jr."/>
            <person name="Alves L.M.C."/>
            <person name="do Amaral A.M."/>
            <person name="Bertolini M.C."/>
            <person name="Camargo L.E.A."/>
            <person name="Camarotte G."/>
            <person name="Cannavan F."/>
            <person name="Cardozo J."/>
            <person name="Chambergo F."/>
            <person name="Ciapina L.P."/>
            <person name="Cicarelli R.M.B."/>
            <person name="Coutinho L.L."/>
            <person name="Cursino-Santos J.R."/>
            <person name="El-Dorry H."/>
            <person name="Faria J.B."/>
            <person name="Ferreira A.J.S."/>
            <person name="Ferreira R.C.C."/>
            <person name="Ferro M.I.T."/>
            <person name="Formighieri E.F."/>
            <person name="Franco M.C."/>
            <person name="Greggio C.C."/>
            <person name="Gruber A."/>
            <person name="Katsuyama A.M."/>
            <person name="Kishi L.T."/>
            <person name="Leite R.P."/>
            <person name="Lemos E.G.M."/>
            <person name="Lemos M.V.F."/>
            <person name="Locali E.C."/>
            <person name="Machado M.A."/>
            <person name="Madeira A.M.B.N."/>
            <person name="Martinez-Rossi N.M."/>
            <person name="Martins E.C."/>
            <person name="Meidanis J."/>
            <person name="Menck C.F.M."/>
            <person name="Miyaki C.Y."/>
            <person name="Moon D.H."/>
            <person name="Moreira L.M."/>
            <person name="Novo M.T.M."/>
            <person name="Okura V.K."/>
            <person name="Oliveira M.C."/>
            <person name="Oliveira V.R."/>
            <person name="Pereira H.A."/>
            <person name="Rossi A."/>
            <person name="Sena J.A.D."/>
            <person name="Silva C."/>
            <person name="de Souza R.F."/>
            <person name="Spinola L.A.F."/>
            <person name="Takita M.A."/>
            <person name="Tamura R.E."/>
            <person name="Teixeira E.C."/>
            <person name="Tezza R.I.D."/>
            <person name="Trindade dos Santos M."/>
            <person name="Truffi D."/>
            <person name="Tsai S.M."/>
            <person name="White F.F."/>
            <person name="Setubal J.C."/>
            <person name="Kitajima J.P."/>
        </authorList>
    </citation>
    <scope>NUCLEOTIDE SEQUENCE [LARGE SCALE GENOMIC DNA]</scope>
    <source>
        <strain>ATCC 33913 / DSM 3586 / NCPPB 528 / LMG 568 / P 25</strain>
    </source>
</reference>
<gene>
    <name evidence="1" type="primary">recA</name>
    <name type="ordered locus">XCC1722</name>
</gene>
<comment type="function">
    <text>Can catalyze the hydrolysis of ATP in the presence of single-stranded DNA, the ATP-dependent uptake of single-stranded DNA by duplex DNA, and the ATP-dependent hybridization of homologous single-stranded DNAs. It interacts with LexA causing its activation and leading to its autocatalytic cleavage.</text>
</comment>
<comment type="subcellular location">
    <subcellularLocation>
        <location evidence="1">Cytoplasm</location>
    </subcellularLocation>
</comment>
<comment type="similarity">
    <text evidence="1">Belongs to the RecA family.</text>
</comment>
<organism>
    <name type="scientific">Xanthomonas campestris pv. campestris (strain ATCC 33913 / DSM 3586 / NCPPB 528 / LMG 568 / P 25)</name>
    <dbReference type="NCBI Taxonomy" id="190485"/>
    <lineage>
        <taxon>Bacteria</taxon>
        <taxon>Pseudomonadati</taxon>
        <taxon>Pseudomonadota</taxon>
        <taxon>Gammaproteobacteria</taxon>
        <taxon>Lysobacterales</taxon>
        <taxon>Lysobacteraceae</taxon>
        <taxon>Xanthomonas</taxon>
    </lineage>
</organism>
<feature type="chain" id="PRO_0000122903" description="Protein RecA">
    <location>
        <begin position="1"/>
        <end position="343"/>
    </location>
</feature>
<feature type="binding site" evidence="1">
    <location>
        <begin position="65"/>
        <end position="72"/>
    </location>
    <ligand>
        <name>ATP</name>
        <dbReference type="ChEBI" id="CHEBI:30616"/>
    </ligand>
</feature>
<accession>Q60101</accession>
<sequence length="343" mass="37018">MDENKKRALSAALSQIEKQFGKGSVMRMGDRVIEAVEVIPTGSLMLDIALGIGGLPKGRVVEIYGPESSGKTTLTLQAIAECQKLGGTAAFIDAEHALDPIYAAKLGVNVDDLLLSQPDTGEQALEIADMLVRSSSVDIVVIDSVAALTPKAEIEGEMGDQLPGLQARLMSQALRKLTGNIKRSNTLVVFINQLRMKIGVMMPGQSPEVTTGGNALKFYASVRLDIRRIGAIKKGDEIIGNQTKIKVVKNKLAPPFKQVITEILYGEGISREGELIDMGVEAKLVDKAGAWYSYGDERIGQGKDNARGYLRDNPQVAIKLEAELREKFQPAEAPREAGETESE</sequence>
<protein>
    <recommendedName>
        <fullName evidence="1">Protein RecA</fullName>
    </recommendedName>
    <alternativeName>
        <fullName evidence="1">Recombinase A</fullName>
    </alternativeName>
</protein>
<dbReference type="EMBL" id="U49086">
    <property type="protein sequence ID" value="AAC44078.1"/>
    <property type="molecule type" value="Genomic_DNA"/>
</dbReference>
<dbReference type="EMBL" id="AF399933">
    <property type="protein sequence ID" value="AAK85398.1"/>
    <property type="molecule type" value="Genomic_DNA"/>
</dbReference>
<dbReference type="EMBL" id="AE008922">
    <property type="protein sequence ID" value="AAM41016.1"/>
    <property type="molecule type" value="Genomic_DNA"/>
</dbReference>
<dbReference type="PIR" id="JC4718">
    <property type="entry name" value="JC4718"/>
</dbReference>
<dbReference type="RefSeq" id="NP_637092.1">
    <property type="nucleotide sequence ID" value="NC_003902.1"/>
</dbReference>
<dbReference type="RefSeq" id="WP_011036899.1">
    <property type="nucleotide sequence ID" value="NC_003902.1"/>
</dbReference>
<dbReference type="SMR" id="Q60101"/>
<dbReference type="STRING" id="190485.XCC1722"/>
<dbReference type="EnsemblBacteria" id="AAM41016">
    <property type="protein sequence ID" value="AAM41016"/>
    <property type="gene ID" value="XCC1722"/>
</dbReference>
<dbReference type="GeneID" id="58013723"/>
<dbReference type="KEGG" id="xcc:XCC1722"/>
<dbReference type="PATRIC" id="fig|190485.4.peg.1838"/>
<dbReference type="eggNOG" id="COG0468">
    <property type="taxonomic scope" value="Bacteria"/>
</dbReference>
<dbReference type="HOGENOM" id="CLU_040469_1_2_6"/>
<dbReference type="OrthoDB" id="9776733at2"/>
<dbReference type="Proteomes" id="UP000001010">
    <property type="component" value="Chromosome"/>
</dbReference>
<dbReference type="GO" id="GO:0005737">
    <property type="term" value="C:cytoplasm"/>
    <property type="evidence" value="ECO:0007669"/>
    <property type="project" value="UniProtKB-SubCell"/>
</dbReference>
<dbReference type="GO" id="GO:0005524">
    <property type="term" value="F:ATP binding"/>
    <property type="evidence" value="ECO:0007669"/>
    <property type="project" value="UniProtKB-UniRule"/>
</dbReference>
<dbReference type="GO" id="GO:0016887">
    <property type="term" value="F:ATP hydrolysis activity"/>
    <property type="evidence" value="ECO:0007669"/>
    <property type="project" value="InterPro"/>
</dbReference>
<dbReference type="GO" id="GO:0140664">
    <property type="term" value="F:ATP-dependent DNA damage sensor activity"/>
    <property type="evidence" value="ECO:0007669"/>
    <property type="project" value="InterPro"/>
</dbReference>
<dbReference type="GO" id="GO:0003684">
    <property type="term" value="F:damaged DNA binding"/>
    <property type="evidence" value="ECO:0007669"/>
    <property type="project" value="UniProtKB-UniRule"/>
</dbReference>
<dbReference type="GO" id="GO:0003697">
    <property type="term" value="F:single-stranded DNA binding"/>
    <property type="evidence" value="ECO:0007669"/>
    <property type="project" value="UniProtKB-UniRule"/>
</dbReference>
<dbReference type="GO" id="GO:0006310">
    <property type="term" value="P:DNA recombination"/>
    <property type="evidence" value="ECO:0007669"/>
    <property type="project" value="UniProtKB-UniRule"/>
</dbReference>
<dbReference type="GO" id="GO:0006281">
    <property type="term" value="P:DNA repair"/>
    <property type="evidence" value="ECO:0007669"/>
    <property type="project" value="UniProtKB-UniRule"/>
</dbReference>
<dbReference type="GO" id="GO:0009432">
    <property type="term" value="P:SOS response"/>
    <property type="evidence" value="ECO:0007669"/>
    <property type="project" value="UniProtKB-UniRule"/>
</dbReference>
<dbReference type="CDD" id="cd00983">
    <property type="entry name" value="RecA"/>
    <property type="match status" value="1"/>
</dbReference>
<dbReference type="FunFam" id="3.40.50.300:FF:000087">
    <property type="entry name" value="Recombinase RecA"/>
    <property type="match status" value="1"/>
</dbReference>
<dbReference type="Gene3D" id="3.40.50.300">
    <property type="entry name" value="P-loop containing nucleotide triphosphate hydrolases"/>
    <property type="match status" value="1"/>
</dbReference>
<dbReference type="HAMAP" id="MF_00268">
    <property type="entry name" value="RecA"/>
    <property type="match status" value="1"/>
</dbReference>
<dbReference type="InterPro" id="IPR003593">
    <property type="entry name" value="AAA+_ATPase"/>
</dbReference>
<dbReference type="InterPro" id="IPR013765">
    <property type="entry name" value="DNA_recomb/repair_RecA"/>
</dbReference>
<dbReference type="InterPro" id="IPR020584">
    <property type="entry name" value="DNA_recomb/repair_RecA_CS"/>
</dbReference>
<dbReference type="InterPro" id="IPR027417">
    <property type="entry name" value="P-loop_NTPase"/>
</dbReference>
<dbReference type="InterPro" id="IPR049261">
    <property type="entry name" value="RecA-like_C"/>
</dbReference>
<dbReference type="InterPro" id="IPR049428">
    <property type="entry name" value="RecA-like_N"/>
</dbReference>
<dbReference type="InterPro" id="IPR020588">
    <property type="entry name" value="RecA_ATP-bd"/>
</dbReference>
<dbReference type="InterPro" id="IPR023400">
    <property type="entry name" value="RecA_C_sf"/>
</dbReference>
<dbReference type="InterPro" id="IPR020587">
    <property type="entry name" value="RecA_monomer-monomer_interface"/>
</dbReference>
<dbReference type="NCBIfam" id="TIGR02012">
    <property type="entry name" value="tigrfam_recA"/>
    <property type="match status" value="1"/>
</dbReference>
<dbReference type="PANTHER" id="PTHR45900:SF1">
    <property type="entry name" value="MITOCHONDRIAL DNA REPAIR PROTEIN RECA HOMOLOG-RELATED"/>
    <property type="match status" value="1"/>
</dbReference>
<dbReference type="PANTHER" id="PTHR45900">
    <property type="entry name" value="RECA"/>
    <property type="match status" value="1"/>
</dbReference>
<dbReference type="Pfam" id="PF00154">
    <property type="entry name" value="RecA"/>
    <property type="match status" value="1"/>
</dbReference>
<dbReference type="Pfam" id="PF21096">
    <property type="entry name" value="RecA_C"/>
    <property type="match status" value="1"/>
</dbReference>
<dbReference type="PRINTS" id="PR00142">
    <property type="entry name" value="RECA"/>
</dbReference>
<dbReference type="SMART" id="SM00382">
    <property type="entry name" value="AAA"/>
    <property type="match status" value="1"/>
</dbReference>
<dbReference type="SUPFAM" id="SSF52540">
    <property type="entry name" value="P-loop containing nucleoside triphosphate hydrolases"/>
    <property type="match status" value="1"/>
</dbReference>
<dbReference type="SUPFAM" id="SSF54752">
    <property type="entry name" value="RecA protein, C-terminal domain"/>
    <property type="match status" value="1"/>
</dbReference>
<dbReference type="PROSITE" id="PS00321">
    <property type="entry name" value="RECA_1"/>
    <property type="match status" value="1"/>
</dbReference>
<dbReference type="PROSITE" id="PS50162">
    <property type="entry name" value="RECA_2"/>
    <property type="match status" value="1"/>
</dbReference>
<dbReference type="PROSITE" id="PS50163">
    <property type="entry name" value="RECA_3"/>
    <property type="match status" value="1"/>
</dbReference>